<gene>
    <name evidence="4" type="primary">sthR</name>
    <name type="ORF">SNOG_07860</name>
</gene>
<proteinExistence type="inferred from homology"/>
<sequence>MSTISFFATSKRTSCDRCRKQKLRCPPDKDDMGTCGRCLRAGVACATSYTKPRGRSQKHGISTDGTSHVSGLDMQEPALPTPESVLSAGLTSSVQVAEDGSQLWSPLEEYNHLPSLSNFESGALSQSQDEDFAGLWWSPLHEDLDLDVHMDPSGACQNGYSAEISSFSRTDCSRQSNDCSPETLQHVECDMRLSQLNLELCRQSKAYHHWPNTTSDGSVRRPHFAIASALRDLLQNTEAFIHILHCLRNGTELNLDGRYQEPISTHDTGVSPPSLAFPSILNLTSCFFRIVDLFNVLLSSLALELATHSPLQRRSSSSSVTSALQILPDLKLAGLAVQEVSLQTKILVLTITHHFETMERLLGLPADLRVSECKDDNGYGLLGASWTSVLSSGRREKFELGWRRTGNWVTSIESLKANMGTLTKGSC</sequence>
<feature type="chain" id="PRO_0000448658" description="Stemphyloxin II biosynthesis cluster transcription factor sthR">
    <location>
        <begin position="1"/>
        <end position="427"/>
    </location>
</feature>
<feature type="DNA-binding region" description="Zn(2)-C6 fungal-type" evidence="1">
    <location>
        <begin position="15"/>
        <end position="45"/>
    </location>
</feature>
<feature type="region of interest" description="Disordered" evidence="2">
    <location>
        <begin position="51"/>
        <end position="70"/>
    </location>
</feature>
<feature type="compositionally biased region" description="Polar residues" evidence="2">
    <location>
        <begin position="59"/>
        <end position="69"/>
    </location>
</feature>
<protein>
    <recommendedName>
        <fullName evidence="4">Stemphyloxin II biosynthesis cluster transcription factor sthR</fullName>
    </recommendedName>
    <alternativeName>
        <fullName evidence="4">Stemphyloxin II biosynthesis cluster regulator</fullName>
    </alternativeName>
</protein>
<comment type="function">
    <text evidence="3">Transcription factor that regulates the expression of the gene cluster that mediates the biosynthesis of the phytotoxin stemphyloxin II.</text>
</comment>
<comment type="subcellular location">
    <subcellularLocation>
        <location evidence="1">Nucleus</location>
    </subcellularLocation>
</comment>
<comment type="sequence caution" evidence="5">
    <conflict type="erroneous initiation">
        <sequence resource="EMBL-CDS" id="EAT85326"/>
    </conflict>
    <text>Truncated N-terminus.</text>
</comment>
<keyword id="KW-0238">DNA-binding</keyword>
<keyword id="KW-0479">Metal-binding</keyword>
<keyword id="KW-0539">Nucleus</keyword>
<keyword id="KW-0804">Transcription</keyword>
<keyword id="KW-0805">Transcription regulation</keyword>
<keyword id="KW-0862">Zinc</keyword>
<evidence type="ECO:0000255" key="1">
    <source>
        <dbReference type="PROSITE-ProRule" id="PRU00227"/>
    </source>
</evidence>
<evidence type="ECO:0000256" key="2">
    <source>
        <dbReference type="SAM" id="MobiDB-lite"/>
    </source>
</evidence>
<evidence type="ECO:0000269" key="3">
    <source>
    </source>
</evidence>
<evidence type="ECO:0000303" key="4">
    <source>
    </source>
</evidence>
<evidence type="ECO:0000305" key="5"/>
<accession>Q0UK54</accession>
<organism>
    <name type="scientific">Phaeosphaeria nodorum (strain SN15 / ATCC MYA-4574 / FGSC 10173)</name>
    <name type="common">Glume blotch fungus</name>
    <name type="synonym">Parastagonospora nodorum</name>
    <dbReference type="NCBI Taxonomy" id="321614"/>
    <lineage>
        <taxon>Eukaryota</taxon>
        <taxon>Fungi</taxon>
        <taxon>Dikarya</taxon>
        <taxon>Ascomycota</taxon>
        <taxon>Pezizomycotina</taxon>
        <taxon>Dothideomycetes</taxon>
        <taxon>Pleosporomycetidae</taxon>
        <taxon>Pleosporales</taxon>
        <taxon>Pleosporineae</taxon>
        <taxon>Phaeosphaeriaceae</taxon>
        <taxon>Parastagonospora</taxon>
    </lineage>
</organism>
<name>STHR_PHANO</name>
<dbReference type="EMBL" id="CH445335">
    <property type="protein sequence ID" value="EAT85326.1"/>
    <property type="status" value="ALT_INIT"/>
    <property type="molecule type" value="Genomic_DNA"/>
</dbReference>
<dbReference type="RefSeq" id="XP_001798187.1">
    <property type="nucleotide sequence ID" value="XM_001798135.1"/>
</dbReference>
<dbReference type="STRING" id="321614.Q0UK54"/>
<dbReference type="GeneID" id="5975080"/>
<dbReference type="KEGG" id="pno:SNOG_07860"/>
<dbReference type="VEuPathDB" id="FungiDB:JI435_430910"/>
<dbReference type="eggNOG" id="ENOG502RJXI">
    <property type="taxonomic scope" value="Eukaryota"/>
</dbReference>
<dbReference type="HOGENOM" id="CLU_696583_0_0_1"/>
<dbReference type="InParanoid" id="Q0UK54"/>
<dbReference type="OrthoDB" id="3682316at2759"/>
<dbReference type="Proteomes" id="UP000001055">
    <property type="component" value="Unassembled WGS sequence"/>
</dbReference>
<dbReference type="GO" id="GO:0005634">
    <property type="term" value="C:nucleus"/>
    <property type="evidence" value="ECO:0000318"/>
    <property type="project" value="GO_Central"/>
</dbReference>
<dbReference type="GO" id="GO:0003677">
    <property type="term" value="F:DNA binding"/>
    <property type="evidence" value="ECO:0007669"/>
    <property type="project" value="UniProtKB-KW"/>
</dbReference>
<dbReference type="GO" id="GO:0000981">
    <property type="term" value="F:DNA-binding transcription factor activity, RNA polymerase II-specific"/>
    <property type="evidence" value="ECO:0007669"/>
    <property type="project" value="InterPro"/>
</dbReference>
<dbReference type="GO" id="GO:0008270">
    <property type="term" value="F:zinc ion binding"/>
    <property type="evidence" value="ECO:0007669"/>
    <property type="project" value="InterPro"/>
</dbReference>
<dbReference type="CDD" id="cd00067">
    <property type="entry name" value="GAL4"/>
    <property type="match status" value="1"/>
</dbReference>
<dbReference type="Gene3D" id="4.10.240.10">
    <property type="entry name" value="Zn(2)-C6 fungal-type DNA-binding domain"/>
    <property type="match status" value="1"/>
</dbReference>
<dbReference type="InterPro" id="IPR050797">
    <property type="entry name" value="Carb_Metab_Trans_Reg"/>
</dbReference>
<dbReference type="InterPro" id="IPR036864">
    <property type="entry name" value="Zn2-C6_fun-type_DNA-bd_sf"/>
</dbReference>
<dbReference type="InterPro" id="IPR001138">
    <property type="entry name" value="Zn2Cys6_DnaBD"/>
</dbReference>
<dbReference type="PANTHER" id="PTHR31668">
    <property type="entry name" value="GLUCOSE TRANSPORT TRANSCRIPTION REGULATOR RGT1-RELATED-RELATED"/>
    <property type="match status" value="1"/>
</dbReference>
<dbReference type="PANTHER" id="PTHR31668:SF23">
    <property type="entry name" value="ZN(II)2CYS6 TRANSCRIPTION FACTOR (EUROFUNG)"/>
    <property type="match status" value="1"/>
</dbReference>
<dbReference type="Pfam" id="PF00172">
    <property type="entry name" value="Zn_clus"/>
    <property type="match status" value="1"/>
</dbReference>
<dbReference type="SMART" id="SM00066">
    <property type="entry name" value="GAL4"/>
    <property type="match status" value="1"/>
</dbReference>
<dbReference type="SUPFAM" id="SSF57701">
    <property type="entry name" value="Zn2/Cys6 DNA-binding domain"/>
    <property type="match status" value="1"/>
</dbReference>
<dbReference type="PROSITE" id="PS00463">
    <property type="entry name" value="ZN2_CY6_FUNGAL_1"/>
    <property type="match status" value="1"/>
</dbReference>
<dbReference type="PROSITE" id="PS50048">
    <property type="entry name" value="ZN2_CY6_FUNGAL_2"/>
    <property type="match status" value="1"/>
</dbReference>
<reference key="1">
    <citation type="journal article" date="2007" name="Plant Cell">
        <title>Dothideomycete-plant interactions illuminated by genome sequencing and EST analysis of the wheat pathogen Stagonospora nodorum.</title>
        <authorList>
            <person name="Hane J.K."/>
            <person name="Lowe R.G.T."/>
            <person name="Solomon P.S."/>
            <person name="Tan K.-C."/>
            <person name="Schoch C.L."/>
            <person name="Spatafora J.W."/>
            <person name="Crous P.W."/>
            <person name="Kodira C.D."/>
            <person name="Birren B.W."/>
            <person name="Galagan J.E."/>
            <person name="Torriani S.F.F."/>
            <person name="McDonald B.A."/>
            <person name="Oliver R.P."/>
        </authorList>
    </citation>
    <scope>NUCLEOTIDE SEQUENCE [LARGE SCALE GENOMIC DNA]</scope>
    <source>
        <strain>SN15 / ATCC MYA-4574 / FGSC 10173</strain>
    </source>
</reference>
<reference key="2">
    <citation type="journal article" date="2019" name="Chemistry">
        <title>Biosynthesis of a Tricyclo[6.2.2.02,7]dodecane System by a Berberine Bridge Enzyme-like Intramolecular Aldolase.</title>
        <authorList>
            <person name="Li H."/>
            <person name="Hu J."/>
            <person name="Wei H."/>
            <person name="Solomon P.S."/>
            <person name="Stubbs K.A."/>
            <person name="Chooi Y.H."/>
        </authorList>
    </citation>
    <scope>FUNCTION</scope>
</reference>